<gene>
    <name evidence="1" type="primary">hcp</name>
    <name type="ordered locus">MTH_1453</name>
</gene>
<feature type="chain" id="PRO_0000151693" description="Hydroxylamine reductase">
    <location>
        <begin position="1"/>
        <end position="427"/>
    </location>
</feature>
<feature type="binding site" evidence="1">
    <location>
        <position position="3"/>
    </location>
    <ligand>
        <name>[4Fe-4S] cluster</name>
        <dbReference type="ChEBI" id="CHEBI:49883"/>
    </ligand>
</feature>
<feature type="binding site" evidence="1">
    <location>
        <position position="6"/>
    </location>
    <ligand>
        <name>[4Fe-4S] cluster</name>
        <dbReference type="ChEBI" id="CHEBI:49883"/>
    </ligand>
</feature>
<feature type="binding site" evidence="1">
    <location>
        <position position="15"/>
    </location>
    <ligand>
        <name>[4Fe-4S] cluster</name>
        <dbReference type="ChEBI" id="CHEBI:49883"/>
    </ligand>
</feature>
<feature type="binding site" evidence="1">
    <location>
        <position position="21"/>
    </location>
    <ligand>
        <name>[4Fe-4S] cluster</name>
        <dbReference type="ChEBI" id="CHEBI:49883"/>
    </ligand>
</feature>
<feature type="binding site" evidence="1">
    <location>
        <position position="129"/>
    </location>
    <ligand>
        <name>hybrid [4Fe-2O-2S] cluster</name>
        <dbReference type="ChEBI" id="CHEBI:60519"/>
    </ligand>
</feature>
<feature type="binding site" evidence="1">
    <location>
        <position position="153"/>
    </location>
    <ligand>
        <name>hybrid [4Fe-2O-2S] cluster</name>
        <dbReference type="ChEBI" id="CHEBI:60519"/>
    </ligand>
</feature>
<feature type="binding site" evidence="1">
    <location>
        <position position="197"/>
    </location>
    <ligand>
        <name>hybrid [4Fe-2O-2S] cluster</name>
        <dbReference type="ChEBI" id="CHEBI:60519"/>
    </ligand>
</feature>
<feature type="binding site" description="via persulfide group" evidence="1">
    <location>
        <position position="283"/>
    </location>
    <ligand>
        <name>hybrid [4Fe-2O-2S] cluster</name>
        <dbReference type="ChEBI" id="CHEBI:60519"/>
    </ligand>
</feature>
<feature type="binding site" evidence="1">
    <location>
        <position position="311"/>
    </location>
    <ligand>
        <name>hybrid [4Fe-2O-2S] cluster</name>
        <dbReference type="ChEBI" id="CHEBI:60519"/>
    </ligand>
</feature>
<feature type="binding site" evidence="1">
    <location>
        <position position="336"/>
    </location>
    <ligand>
        <name>hybrid [4Fe-2O-2S] cluster</name>
        <dbReference type="ChEBI" id="CHEBI:60519"/>
    </ligand>
</feature>
<feature type="binding site" evidence="1">
    <location>
        <position position="370"/>
    </location>
    <ligand>
        <name>hybrid [4Fe-2O-2S] cluster</name>
        <dbReference type="ChEBI" id="CHEBI:60519"/>
    </ligand>
</feature>
<feature type="binding site" evidence="1">
    <location>
        <position position="372"/>
    </location>
    <ligand>
        <name>hybrid [4Fe-2O-2S] cluster</name>
        <dbReference type="ChEBI" id="CHEBI:60519"/>
    </ligand>
</feature>
<feature type="modified residue" description="Cysteine persulfide" evidence="1">
    <location>
        <position position="283"/>
    </location>
</feature>
<reference key="1">
    <citation type="journal article" date="1997" name="J. Bacteriol.">
        <title>Complete genome sequence of Methanobacterium thermoautotrophicum deltaH: functional analysis and comparative genomics.</title>
        <authorList>
            <person name="Smith D.R."/>
            <person name="Doucette-Stamm L.A."/>
            <person name="Deloughery C."/>
            <person name="Lee H.-M."/>
            <person name="Dubois J."/>
            <person name="Aldredge T."/>
            <person name="Bashirzadeh R."/>
            <person name="Blakely D."/>
            <person name="Cook R."/>
            <person name="Gilbert K."/>
            <person name="Harrison D."/>
            <person name="Hoang L."/>
            <person name="Keagle P."/>
            <person name="Lumm W."/>
            <person name="Pothier B."/>
            <person name="Qiu D."/>
            <person name="Spadafora R."/>
            <person name="Vicare R."/>
            <person name="Wang Y."/>
            <person name="Wierzbowski J."/>
            <person name="Gibson R."/>
            <person name="Jiwani N."/>
            <person name="Caruso A."/>
            <person name="Bush D."/>
            <person name="Safer H."/>
            <person name="Patwell D."/>
            <person name="Prabhakar S."/>
            <person name="McDougall S."/>
            <person name="Shimer G."/>
            <person name="Goyal A."/>
            <person name="Pietrovski S."/>
            <person name="Church G.M."/>
            <person name="Daniels C.J."/>
            <person name="Mao J.-I."/>
            <person name="Rice P."/>
            <person name="Noelling J."/>
            <person name="Reeve J.N."/>
        </authorList>
    </citation>
    <scope>NUCLEOTIDE SEQUENCE [LARGE SCALE GENOMIC DNA]</scope>
    <source>
        <strain>ATCC 29096 / DSM 1053 / JCM 10044 / NBRC 100330 / Delta H</strain>
    </source>
</reference>
<sequence length="427" mass="47358">MFCYQCSQTVRGRACTIRGVCGKEPTVARLQDNLLFAIKGISAYLYHARELGYTDEEVDAFLERGFYSTLTNVNFDAGEFIDLALEAGEMNIRTMKLLKKAHIDTYGEPEPTEVRVGALEGPAIIATGHSLRALEELLKQTEGTGINVYTHSELLPAHGYPGLRKYPHLAGQLGGPWFDQKDTFSRYTAAILGTSNCVLLPRDDYRDRMFTCGVAALPGVEHLEGYDFSPLIDKALELPPLSEEDATTLTTGFGLSTILSLADKIRELVEDGKIRRFFLVGGCDSPLPRAKYYTEFVRKLPEDTVVLTLACGKYRFNSMDLGDIEGVPRLIDLGQCNDAIVAVELVEALSNLFQMDINELPLSIILSWMEQKAAAILWSLLSLDLKGMYIGPILPGWANEDIVKFLVDNYDLTPIGDPEEDIRKILG</sequence>
<keyword id="KW-0004">4Fe-4S</keyword>
<keyword id="KW-0963">Cytoplasm</keyword>
<keyword id="KW-0408">Iron</keyword>
<keyword id="KW-0411">Iron-sulfur</keyword>
<keyword id="KW-0479">Metal-binding</keyword>
<keyword id="KW-0560">Oxidoreductase</keyword>
<keyword id="KW-1185">Reference proteome</keyword>
<organism>
    <name type="scientific">Methanothermobacter thermautotrophicus (strain ATCC 29096 / DSM 1053 / JCM 10044 / NBRC 100330 / Delta H)</name>
    <name type="common">Methanobacterium thermoautotrophicum</name>
    <dbReference type="NCBI Taxonomy" id="187420"/>
    <lineage>
        <taxon>Archaea</taxon>
        <taxon>Methanobacteriati</taxon>
        <taxon>Methanobacteriota</taxon>
        <taxon>Methanomada group</taxon>
        <taxon>Methanobacteria</taxon>
        <taxon>Methanobacteriales</taxon>
        <taxon>Methanobacteriaceae</taxon>
        <taxon>Methanothermobacter</taxon>
    </lineage>
</organism>
<evidence type="ECO:0000255" key="1">
    <source>
        <dbReference type="HAMAP-Rule" id="MF_00069"/>
    </source>
</evidence>
<evidence type="ECO:0000305" key="2"/>
<accession>O27502</accession>
<protein>
    <recommendedName>
        <fullName evidence="1">Hydroxylamine reductase</fullName>
        <ecNumber evidence="1">1.7.99.1</ecNumber>
    </recommendedName>
    <alternativeName>
        <fullName evidence="1">Hybrid-cluster protein</fullName>
        <shortName evidence="1">HCP</shortName>
    </alternativeName>
    <alternativeName>
        <fullName evidence="1">Prismane protein</fullName>
    </alternativeName>
</protein>
<name>HCP_METTH</name>
<proteinExistence type="inferred from homology"/>
<dbReference type="EC" id="1.7.99.1" evidence="1"/>
<dbReference type="EMBL" id="AE000666">
    <property type="protein sequence ID" value="AAB85928.1"/>
    <property type="status" value="ALT_INIT"/>
    <property type="molecule type" value="Genomic_DNA"/>
</dbReference>
<dbReference type="PIR" id="A59199">
    <property type="entry name" value="A59199"/>
</dbReference>
<dbReference type="SMR" id="O27502"/>
<dbReference type="STRING" id="187420.MTH_1453"/>
<dbReference type="PaxDb" id="187420-MTH_1453"/>
<dbReference type="EnsemblBacteria" id="AAB85928">
    <property type="protein sequence ID" value="AAB85928"/>
    <property type="gene ID" value="MTH_1453"/>
</dbReference>
<dbReference type="KEGG" id="mth:MTH_1453"/>
<dbReference type="PATRIC" id="fig|187420.15.peg.1415"/>
<dbReference type="HOGENOM" id="CLU_038344_0_0_2"/>
<dbReference type="InParanoid" id="O27502"/>
<dbReference type="Proteomes" id="UP000005223">
    <property type="component" value="Chromosome"/>
</dbReference>
<dbReference type="GO" id="GO:0005737">
    <property type="term" value="C:cytoplasm"/>
    <property type="evidence" value="ECO:0007669"/>
    <property type="project" value="UniProtKB-SubCell"/>
</dbReference>
<dbReference type="GO" id="GO:0051539">
    <property type="term" value="F:4 iron, 4 sulfur cluster binding"/>
    <property type="evidence" value="ECO:0007669"/>
    <property type="project" value="UniProtKB-KW"/>
</dbReference>
<dbReference type="GO" id="GO:0050418">
    <property type="term" value="F:hydroxylamine reductase activity"/>
    <property type="evidence" value="ECO:0007669"/>
    <property type="project" value="UniProtKB-UniRule"/>
</dbReference>
<dbReference type="GO" id="GO:0046872">
    <property type="term" value="F:metal ion binding"/>
    <property type="evidence" value="ECO:0007669"/>
    <property type="project" value="UniProtKB-KW"/>
</dbReference>
<dbReference type="GO" id="GO:0004601">
    <property type="term" value="F:peroxidase activity"/>
    <property type="evidence" value="ECO:0007669"/>
    <property type="project" value="TreeGrafter"/>
</dbReference>
<dbReference type="GO" id="GO:0042542">
    <property type="term" value="P:response to hydrogen peroxide"/>
    <property type="evidence" value="ECO:0007669"/>
    <property type="project" value="TreeGrafter"/>
</dbReference>
<dbReference type="CDD" id="cd01914">
    <property type="entry name" value="HCP"/>
    <property type="match status" value="1"/>
</dbReference>
<dbReference type="Gene3D" id="1.20.1270.20">
    <property type="match status" value="1"/>
</dbReference>
<dbReference type="Gene3D" id="3.40.50.2030">
    <property type="match status" value="2"/>
</dbReference>
<dbReference type="HAMAP" id="MF_00069">
    <property type="entry name" value="Hydroxylam_reduct"/>
    <property type="match status" value="1"/>
</dbReference>
<dbReference type="InterPro" id="IPR004137">
    <property type="entry name" value="HCP/CODH"/>
</dbReference>
<dbReference type="InterPro" id="IPR010048">
    <property type="entry name" value="Hydroxylam_reduct"/>
</dbReference>
<dbReference type="InterPro" id="IPR016099">
    <property type="entry name" value="Prismane-like_a/b-sand"/>
</dbReference>
<dbReference type="InterPro" id="IPR011254">
    <property type="entry name" value="Prismane-like_sf"/>
</dbReference>
<dbReference type="InterPro" id="IPR016100">
    <property type="entry name" value="Prismane_a-bundle"/>
</dbReference>
<dbReference type="NCBIfam" id="TIGR01703">
    <property type="entry name" value="hybrid_clust"/>
    <property type="match status" value="1"/>
</dbReference>
<dbReference type="NCBIfam" id="NF003658">
    <property type="entry name" value="PRK05290.1"/>
    <property type="match status" value="1"/>
</dbReference>
<dbReference type="PANTHER" id="PTHR30109">
    <property type="entry name" value="HYDROXYLAMINE REDUCTASE"/>
    <property type="match status" value="1"/>
</dbReference>
<dbReference type="PANTHER" id="PTHR30109:SF0">
    <property type="entry name" value="HYDROXYLAMINE REDUCTASE"/>
    <property type="match status" value="1"/>
</dbReference>
<dbReference type="Pfam" id="PF03063">
    <property type="entry name" value="Prismane"/>
    <property type="match status" value="2"/>
</dbReference>
<dbReference type="SUPFAM" id="SSF56821">
    <property type="entry name" value="Prismane protein-like"/>
    <property type="match status" value="1"/>
</dbReference>
<comment type="function">
    <text evidence="1">Catalyzes the reduction of hydroxylamine to form NH(3) and H(2)O.</text>
</comment>
<comment type="catalytic activity">
    <reaction evidence="1">
        <text>A + NH4(+) + H2O = hydroxylamine + AH2 + H(+)</text>
        <dbReference type="Rhea" id="RHEA:22052"/>
        <dbReference type="ChEBI" id="CHEBI:13193"/>
        <dbReference type="ChEBI" id="CHEBI:15377"/>
        <dbReference type="ChEBI" id="CHEBI:15378"/>
        <dbReference type="ChEBI" id="CHEBI:15429"/>
        <dbReference type="ChEBI" id="CHEBI:17499"/>
        <dbReference type="ChEBI" id="CHEBI:28938"/>
        <dbReference type="EC" id="1.7.99.1"/>
    </reaction>
</comment>
<comment type="cofactor">
    <cofactor evidence="1">
        <name>[4Fe-4S] cluster</name>
        <dbReference type="ChEBI" id="CHEBI:49883"/>
    </cofactor>
    <text evidence="1">Binds 1 [4Fe-4S] cluster.</text>
</comment>
<comment type="cofactor">
    <cofactor evidence="1">
        <name>hybrid [4Fe-2O-2S] cluster</name>
        <dbReference type="ChEBI" id="CHEBI:60519"/>
    </cofactor>
    <text evidence="1">Binds 1 hybrid [4Fe-2O-2S] cluster.</text>
</comment>
<comment type="subcellular location">
    <subcellularLocation>
        <location evidence="1">Cytoplasm</location>
    </subcellularLocation>
</comment>
<comment type="similarity">
    <text evidence="1">Belongs to the HCP family.</text>
</comment>
<comment type="sequence caution" evidence="2">
    <conflict type="erroneous initiation">
        <sequence resource="EMBL-CDS" id="AAB85928"/>
    </conflict>
    <text>Extended N-terminus.</text>
</comment>